<accession>C5DAQ1</accession>
<reference key="1">
    <citation type="submission" date="2009-06" db="EMBL/GenBank/DDBJ databases">
        <title>Complete sequence of chromosome of Geopacillus sp. WCH70.</title>
        <authorList>
            <consortium name="US DOE Joint Genome Institute"/>
            <person name="Lucas S."/>
            <person name="Copeland A."/>
            <person name="Lapidus A."/>
            <person name="Glavina del Rio T."/>
            <person name="Dalin E."/>
            <person name="Tice H."/>
            <person name="Bruce D."/>
            <person name="Goodwin L."/>
            <person name="Pitluck S."/>
            <person name="Chertkov O."/>
            <person name="Brettin T."/>
            <person name="Detter J.C."/>
            <person name="Han C."/>
            <person name="Larimer F."/>
            <person name="Land M."/>
            <person name="Hauser L."/>
            <person name="Kyrpides N."/>
            <person name="Mikhailova N."/>
            <person name="Brumm P."/>
            <person name="Mead D.A."/>
            <person name="Richardson P."/>
        </authorList>
    </citation>
    <scope>NUCLEOTIDE SEQUENCE [LARGE SCALE GENOMIC DNA]</scope>
    <source>
        <strain>WCH70</strain>
    </source>
</reference>
<protein>
    <recommendedName>
        <fullName evidence="1">Homoserine O-acetyltransferase</fullName>
        <shortName evidence="1">HAT</shortName>
        <ecNumber evidence="1">2.3.1.31</ecNumber>
    </recommendedName>
    <alternativeName>
        <fullName evidence="1">Homoserine transacetylase</fullName>
        <shortName evidence="1">HTA</shortName>
    </alternativeName>
</protein>
<evidence type="ECO:0000255" key="1">
    <source>
        <dbReference type="HAMAP-Rule" id="MF_00295"/>
    </source>
</evidence>
<feature type="chain" id="PRO_1000204923" description="Homoserine O-acetyltransferase">
    <location>
        <begin position="1"/>
        <end position="302"/>
    </location>
</feature>
<feature type="active site" description="Acyl-thioester intermediate" evidence="1">
    <location>
        <position position="142"/>
    </location>
</feature>
<feature type="active site" description="Proton acceptor" evidence="1">
    <location>
        <position position="235"/>
    </location>
</feature>
<feature type="active site" evidence="1">
    <location>
        <position position="237"/>
    </location>
</feature>
<feature type="binding site" evidence="1">
    <location>
        <position position="163"/>
    </location>
    <ligand>
        <name>substrate</name>
    </ligand>
</feature>
<feature type="binding site" evidence="1">
    <location>
        <position position="192"/>
    </location>
    <ligand>
        <name>substrate</name>
    </ligand>
</feature>
<feature type="binding site" evidence="1">
    <location>
        <position position="249"/>
    </location>
    <ligand>
        <name>substrate</name>
    </ligand>
</feature>
<feature type="site" description="Important for acyl-CoA specificity" evidence="1">
    <location>
        <position position="111"/>
    </location>
</feature>
<feature type="site" description="Important for substrate specificity" evidence="1">
    <location>
        <position position="192"/>
    </location>
</feature>
<proteinExistence type="inferred from homology"/>
<comment type="function">
    <text evidence="1">Transfers an acetyl group from acetyl-CoA to L-homoserine, forming acetyl-L-homoserine.</text>
</comment>
<comment type="catalytic activity">
    <reaction evidence="1">
        <text>L-homoserine + acetyl-CoA = O-acetyl-L-homoserine + CoA</text>
        <dbReference type="Rhea" id="RHEA:13701"/>
        <dbReference type="ChEBI" id="CHEBI:57287"/>
        <dbReference type="ChEBI" id="CHEBI:57288"/>
        <dbReference type="ChEBI" id="CHEBI:57476"/>
        <dbReference type="ChEBI" id="CHEBI:57716"/>
        <dbReference type="EC" id="2.3.1.31"/>
    </reaction>
</comment>
<comment type="pathway">
    <text evidence="1">Amino-acid biosynthesis; L-methionine biosynthesis via de novo pathway; O-acetyl-L-homoserine from L-homoserine: step 1/1.</text>
</comment>
<comment type="subcellular location">
    <subcellularLocation>
        <location evidence="1">Cytoplasm</location>
    </subcellularLocation>
</comment>
<comment type="similarity">
    <text evidence="1">Belongs to the MetA family.</text>
</comment>
<gene>
    <name evidence="1" type="primary">metAA</name>
    <name type="ordered locus">GWCH70_1567</name>
</gene>
<sequence>MPINIPKDLPAKEILEQENIFVMDEERAYSQDIRPLNIVILNLMPEKEKAETQLLRLLGNSPLQVNVTFLRPATHESKTTSKHHLEQFYTIFPHIRHRKFDGMIITGAPVEQMPFEKVTYWSELTEIMEWTKTNVTSTLHICWGAQAGLYYHYGIPKYPLPQKCFGIFEHSLEVKNVKLLRGFDDVFRMPHSRHTDVKREDIEKIPELTILSVSEKAGVCLVASNDGKQIFLTGHPEYDATTLKEEYERDLAKGLPIHIPESYFPNDDPTKEPLNTWRSHANLLFVNWLNYYVYQETPYEWE</sequence>
<dbReference type="EC" id="2.3.1.31" evidence="1"/>
<dbReference type="EMBL" id="CP001638">
    <property type="protein sequence ID" value="ACS24365.1"/>
    <property type="molecule type" value="Genomic_DNA"/>
</dbReference>
<dbReference type="SMR" id="C5DAQ1"/>
<dbReference type="STRING" id="471223.GWCH70_1567"/>
<dbReference type="KEGG" id="gwc:GWCH70_1567"/>
<dbReference type="eggNOG" id="COG1897">
    <property type="taxonomic scope" value="Bacteria"/>
</dbReference>
<dbReference type="HOGENOM" id="CLU_057851_0_1_9"/>
<dbReference type="OrthoDB" id="9772423at2"/>
<dbReference type="UniPathway" id="UPA00051">
    <property type="reaction ID" value="UER00074"/>
</dbReference>
<dbReference type="GO" id="GO:0005737">
    <property type="term" value="C:cytoplasm"/>
    <property type="evidence" value="ECO:0007669"/>
    <property type="project" value="UniProtKB-SubCell"/>
</dbReference>
<dbReference type="GO" id="GO:0004414">
    <property type="term" value="F:homoserine O-acetyltransferase activity"/>
    <property type="evidence" value="ECO:0007669"/>
    <property type="project" value="UniProtKB-EC"/>
</dbReference>
<dbReference type="GO" id="GO:0008899">
    <property type="term" value="F:homoserine O-succinyltransferase activity"/>
    <property type="evidence" value="ECO:0007669"/>
    <property type="project" value="UniProtKB-UniRule"/>
</dbReference>
<dbReference type="GO" id="GO:0019281">
    <property type="term" value="P:L-methionine biosynthetic process from homoserine via O-succinyl-L-homoserine and cystathionine"/>
    <property type="evidence" value="ECO:0007669"/>
    <property type="project" value="InterPro"/>
</dbReference>
<dbReference type="CDD" id="cd03131">
    <property type="entry name" value="GATase1_HTS"/>
    <property type="match status" value="1"/>
</dbReference>
<dbReference type="FunFam" id="3.40.50.880:FF:000004">
    <property type="entry name" value="Homoserine O-succinyltransferase"/>
    <property type="match status" value="1"/>
</dbReference>
<dbReference type="Gene3D" id="3.40.50.880">
    <property type="match status" value="1"/>
</dbReference>
<dbReference type="HAMAP" id="MF_00295">
    <property type="entry name" value="MetA_acyltransf"/>
    <property type="match status" value="1"/>
</dbReference>
<dbReference type="InterPro" id="IPR029062">
    <property type="entry name" value="Class_I_gatase-like"/>
</dbReference>
<dbReference type="InterPro" id="IPR005697">
    <property type="entry name" value="HST_MetA"/>
</dbReference>
<dbReference type="InterPro" id="IPR033752">
    <property type="entry name" value="MetA_family"/>
</dbReference>
<dbReference type="NCBIfam" id="TIGR01001">
    <property type="entry name" value="metA"/>
    <property type="match status" value="1"/>
</dbReference>
<dbReference type="PANTHER" id="PTHR20919">
    <property type="entry name" value="HOMOSERINE O-SUCCINYLTRANSFERASE"/>
    <property type="match status" value="1"/>
</dbReference>
<dbReference type="PANTHER" id="PTHR20919:SF0">
    <property type="entry name" value="HOMOSERINE O-SUCCINYLTRANSFERASE"/>
    <property type="match status" value="1"/>
</dbReference>
<dbReference type="Pfam" id="PF04204">
    <property type="entry name" value="HTS"/>
    <property type="match status" value="1"/>
</dbReference>
<dbReference type="PIRSF" id="PIRSF000450">
    <property type="entry name" value="H_ser_succinyltr"/>
    <property type="match status" value="1"/>
</dbReference>
<dbReference type="SUPFAM" id="SSF52317">
    <property type="entry name" value="Class I glutamine amidotransferase-like"/>
    <property type="match status" value="1"/>
</dbReference>
<keyword id="KW-0012">Acyltransferase</keyword>
<keyword id="KW-0028">Amino-acid biosynthesis</keyword>
<keyword id="KW-0963">Cytoplasm</keyword>
<keyword id="KW-0486">Methionine biosynthesis</keyword>
<keyword id="KW-0808">Transferase</keyword>
<name>METAA_GEOSW</name>
<organism>
    <name type="scientific">Geobacillus sp. (strain WCH70)</name>
    <dbReference type="NCBI Taxonomy" id="471223"/>
    <lineage>
        <taxon>Bacteria</taxon>
        <taxon>Bacillati</taxon>
        <taxon>Bacillota</taxon>
        <taxon>Bacilli</taxon>
        <taxon>Bacillales</taxon>
        <taxon>Anoxybacillaceae</taxon>
        <taxon>Geobacillus</taxon>
    </lineage>
</organism>